<gene>
    <name evidence="2" type="primary">gB</name>
    <name type="synonym">GP14</name>
</gene>
<protein>
    <recommendedName>
        <fullName evidence="2">Envelope glycoprotein B</fullName>
        <shortName evidence="2">gB</shortName>
    </recommendedName>
</protein>
<keyword id="KW-1015">Disulfide bond</keyword>
<keyword id="KW-0325">Glycoprotein</keyword>
<keyword id="KW-1032">Host cell membrane</keyword>
<keyword id="KW-1039">Host endosome</keyword>
<keyword id="KW-1040">Host Golgi apparatus</keyword>
<keyword id="KW-1043">Host membrane</keyword>
<keyword id="KW-0945">Host-virus interaction</keyword>
<keyword id="KW-0472">Membrane</keyword>
<keyword id="KW-0732">Signal</keyword>
<keyword id="KW-0812">Transmembrane</keyword>
<keyword id="KW-1133">Transmembrane helix</keyword>
<keyword id="KW-1161">Viral attachment to host cell</keyword>
<keyword id="KW-0261">Viral envelope protein</keyword>
<keyword id="KW-0946">Virion</keyword>
<keyword id="KW-1160">Virus entry into host cell</keyword>
<organism>
    <name type="scientific">Equine herpesvirus 1 (strain Kentucky D)</name>
    <name type="common">EHV-1</name>
    <name type="synonym">Equine abortion virus</name>
    <dbReference type="NCBI Taxonomy" id="10330"/>
    <lineage>
        <taxon>Viruses</taxon>
        <taxon>Duplodnaviria</taxon>
        <taxon>Heunggongvirae</taxon>
        <taxon>Peploviricota</taxon>
        <taxon>Herviviricetes</taxon>
        <taxon>Herpesvirales</taxon>
        <taxon>Orthoherpesviridae</taxon>
        <taxon>Alphaherpesvirinae</taxon>
        <taxon>Varicellovirus</taxon>
        <taxon>Varicellovirus equidalpha1</taxon>
        <taxon>Equid alphaherpesvirus 1</taxon>
    </lineage>
</organism>
<sequence length="980" mass="109805">MSSGCRSVGGSTWGNWRGDGGDLRQRRVLSPVCSAPAAGSWIGSQLGNVGNLLATPHPLGKPASSRVGTIVLACLLLFGSCVVRAVPTTPSPPTSTPTSMSTHSHGTVDPTLLPTETPDPLRLAVRESGILAEDGDFYTCPPPTGSTVVRIEPPRTCPKFDLGRNFTEGIAVIFKENIAPYKFRANVYYKDIVVTRVWKGYSHTSLSDRYNDRVPVSVEEIFGLIDSKGKCSSKAEYLRDNIMHHAYHDDEDEVELDLVPSKFATPGARAWQTTNDTTSYVGWMPWRHYTSTSVNCIVEEVEARSVYPYDSFALSTGDIVYASPFYGLRAAARIEHNSYAQERFRQVEGYRPRDLDSKLQAEEPVTKNFITTPHVTVSWNWTEKKVEACTLTKWKEVDELVRDEFRGSYRFTIRSISSTFISNTTQFKLESAPLTECVSKEAKEAIDSIYKKQYESTHVFSGDVEYYLARGGFLIAFRPMLSNELARLYLNELVRSNRTYDLKNLLNPNANNNNNTTRRRRSLLSVPEPQPTQDGVHREQILHRLHKRAVEATAGTDSSNVTAKQLELIKTTSSIEFAMLQFAYDHIQSHVNEMLSRIATAWCTLQNKERTLWNEMVKINPSAIVSATLDERVAARVLGDVIAITHCAKIEGNVYLQNSMRSMDSNTCYSRPPVTFTITKNANNRGSIEGQLGEENEIFTERKLIEPCALNQKRYFKFGKEYVYYENYTFVRKVPPTEIEVISTYVELNLTLLEDREFLPLEVYTRAELEDTGLLDYSEIQRRNQLHALRFYDIDSVVNVDNTAVIMQGIASFFKGLGKVGEAVGTLVLGAAGAVVSTVSGIASFLNNPFGGLAIGLLVIAGLVAAFFAYRYVMQIRSNPMKALYPITTKALKNKAKTSYGQNEEDDGSDFDEAKLEEAREMIKYMSMVSALEKQEKKAIKKNSGVGLIASNVSKLALRRRGPKYTRLQQNDTMENEKMV</sequence>
<accession>P25218</accession>
<accession>P28922</accession>
<dbReference type="EMBL" id="M34861">
    <property type="protein sequence ID" value="AAA46086.1"/>
    <property type="molecule type" value="Genomic_DNA"/>
</dbReference>
<dbReference type="EMBL" id="M35145">
    <property type="protein sequence ID" value="AAA46067.1"/>
    <property type="molecule type" value="Genomic_DNA"/>
</dbReference>
<dbReference type="PIR" id="JH0109">
    <property type="entry name" value="JH0109"/>
</dbReference>
<dbReference type="SMR" id="P25218"/>
<dbReference type="GlyCosmos" id="P25218">
    <property type="glycosylation" value="10 sites, No reported glycans"/>
</dbReference>
<dbReference type="KEGG" id="vg:1487545"/>
<dbReference type="GO" id="GO:0044175">
    <property type="term" value="C:host cell endosome membrane"/>
    <property type="evidence" value="ECO:0007669"/>
    <property type="project" value="UniProtKB-SubCell"/>
</dbReference>
<dbReference type="GO" id="GO:0044178">
    <property type="term" value="C:host cell Golgi membrane"/>
    <property type="evidence" value="ECO:0007669"/>
    <property type="project" value="UniProtKB-SubCell"/>
</dbReference>
<dbReference type="GO" id="GO:0020002">
    <property type="term" value="C:host cell plasma membrane"/>
    <property type="evidence" value="ECO:0007669"/>
    <property type="project" value="UniProtKB-SubCell"/>
</dbReference>
<dbReference type="GO" id="GO:0016020">
    <property type="term" value="C:membrane"/>
    <property type="evidence" value="ECO:0007669"/>
    <property type="project" value="UniProtKB-KW"/>
</dbReference>
<dbReference type="GO" id="GO:0019031">
    <property type="term" value="C:viral envelope"/>
    <property type="evidence" value="ECO:0007669"/>
    <property type="project" value="UniProtKB-KW"/>
</dbReference>
<dbReference type="GO" id="GO:0055036">
    <property type="term" value="C:virion membrane"/>
    <property type="evidence" value="ECO:0007669"/>
    <property type="project" value="UniProtKB-SubCell"/>
</dbReference>
<dbReference type="GO" id="GO:0046718">
    <property type="term" value="P:symbiont entry into host cell"/>
    <property type="evidence" value="ECO:0007669"/>
    <property type="project" value="UniProtKB-KW"/>
</dbReference>
<dbReference type="GO" id="GO:0019062">
    <property type="term" value="P:virion attachment to host cell"/>
    <property type="evidence" value="ECO:0007669"/>
    <property type="project" value="UniProtKB-KW"/>
</dbReference>
<dbReference type="Gene3D" id="1.20.5.1890">
    <property type="match status" value="1"/>
</dbReference>
<dbReference type="Gene3D" id="2.30.29.100">
    <property type="match status" value="1"/>
</dbReference>
<dbReference type="Gene3D" id="2.30.30.1230">
    <property type="match status" value="1"/>
</dbReference>
<dbReference type="Gene3D" id="6.10.250.3280">
    <property type="match status" value="1"/>
</dbReference>
<dbReference type="HAMAP" id="MF_04032">
    <property type="entry name" value="HSV_GB"/>
    <property type="match status" value="1"/>
</dbReference>
<dbReference type="InterPro" id="IPR035377">
    <property type="entry name" value="Glycoprot_B_PH1"/>
</dbReference>
<dbReference type="InterPro" id="IPR035381">
    <property type="entry name" value="Glycoprot_B_PH2"/>
</dbReference>
<dbReference type="InterPro" id="IPR038631">
    <property type="entry name" value="Glycoprot_B_PH2_sf"/>
</dbReference>
<dbReference type="InterPro" id="IPR055341">
    <property type="entry name" value="Glycoprotein_B_ecto_C"/>
</dbReference>
<dbReference type="InterPro" id="IPR000234">
    <property type="entry name" value="Herpes_Glycoprot_B"/>
</dbReference>
<dbReference type="Pfam" id="PF17416">
    <property type="entry name" value="Glycoprot_B_PH1"/>
    <property type="match status" value="1"/>
</dbReference>
<dbReference type="Pfam" id="PF17417">
    <property type="entry name" value="Glycoprot_B_PH2"/>
    <property type="match status" value="1"/>
</dbReference>
<dbReference type="Pfam" id="PF00606">
    <property type="entry name" value="Glycoprotein_B"/>
    <property type="match status" value="1"/>
</dbReference>
<dbReference type="SUPFAM" id="SSF161008">
    <property type="entry name" value="Viral glycoprotein ectodomain-like"/>
    <property type="match status" value="1"/>
</dbReference>
<evidence type="ECO:0000255" key="1"/>
<evidence type="ECO:0000255" key="2">
    <source>
        <dbReference type="HAMAP-Rule" id="MF_04032"/>
    </source>
</evidence>
<evidence type="ECO:0000256" key="3">
    <source>
        <dbReference type="SAM" id="MobiDB-lite"/>
    </source>
</evidence>
<evidence type="ECO:0000305" key="4"/>
<organismHost>
    <name type="scientific">Equus caballus</name>
    <name type="common">Horse</name>
    <dbReference type="NCBI Taxonomy" id="9796"/>
</organismHost>
<feature type="signal peptide" evidence="1">
    <location>
        <begin position="1"/>
        <end position="86"/>
    </location>
</feature>
<feature type="chain" id="PRO_0000038173" description="Envelope glycoprotein B">
    <location>
        <begin position="87"/>
        <end position="980"/>
    </location>
</feature>
<feature type="topological domain" description="Virion surface" evidence="2">
    <location>
        <begin position="87"/>
        <end position="849"/>
    </location>
</feature>
<feature type="transmembrane region" description="Helical" evidence="2">
    <location>
        <begin position="850"/>
        <end position="870"/>
    </location>
</feature>
<feature type="topological domain" description="Intravirion" evidence="2">
    <location>
        <begin position="871"/>
        <end position="980"/>
    </location>
</feature>
<feature type="region of interest" description="Disordered" evidence="3">
    <location>
        <begin position="1"/>
        <end position="20"/>
    </location>
</feature>
<feature type="region of interest" description="Disordered" evidence="3">
    <location>
        <begin position="88"/>
        <end position="118"/>
    </location>
</feature>
<feature type="region of interest" description="Involved in fusion and/or binding to host membrane" evidence="2">
    <location>
        <begin position="197"/>
        <end position="203"/>
    </location>
</feature>
<feature type="region of interest" description="Involved in fusion and/or binding to host membrane" evidence="2">
    <location>
        <begin position="282"/>
        <end position="290"/>
    </location>
</feature>
<feature type="region of interest" description="Disordered" evidence="3">
    <location>
        <begin position="505"/>
        <end position="535"/>
    </location>
</feature>
<feature type="region of interest" description="Hydrophobic membrane proximal region" evidence="2">
    <location>
        <begin position="794"/>
        <end position="847"/>
    </location>
</feature>
<feature type="region of interest" description="Hydrophobic membrane proximal region">
    <location>
        <begin position="823"/>
        <end position="843"/>
    </location>
</feature>
<feature type="short sequence motif" description="Golgi targeting" evidence="2">
    <location>
        <begin position="925"/>
        <end position="928"/>
    </location>
</feature>
<feature type="short sequence motif" description="Internalization motif" evidence="2">
    <location>
        <begin position="965"/>
        <end position="968"/>
    </location>
</feature>
<feature type="compositionally biased region" description="Polar residues" evidence="3">
    <location>
        <begin position="1"/>
        <end position="14"/>
    </location>
</feature>
<feature type="compositionally biased region" description="Low complexity" evidence="3">
    <location>
        <begin position="96"/>
        <end position="118"/>
    </location>
</feature>
<feature type="compositionally biased region" description="Low complexity" evidence="3">
    <location>
        <begin position="505"/>
        <end position="516"/>
    </location>
</feature>
<feature type="site" description="Cleavage; by host furin" evidence="1">
    <location>
        <begin position="521"/>
        <end position="522"/>
    </location>
</feature>
<feature type="glycosylation site" description="N-linked (GlcNAc...) asparagine; by host" evidence="2">
    <location>
        <position position="165"/>
    </location>
</feature>
<feature type="glycosylation site" description="N-linked (GlcNAc...) asparagine; by host" evidence="2">
    <location>
        <position position="275"/>
    </location>
</feature>
<feature type="glycosylation site" description="N-linked (GlcNAc...) asparagine; by host" evidence="2">
    <location>
        <position position="380"/>
    </location>
</feature>
<feature type="glycosylation site" description="N-linked (GlcNAc...) asparagine; by host" evidence="2">
    <location>
        <position position="423"/>
    </location>
</feature>
<feature type="glycosylation site" description="N-linked (GlcNAc...) asparagine; by host" evidence="2">
    <location>
        <position position="497"/>
    </location>
</feature>
<feature type="glycosylation site" description="N-linked (GlcNAc...) asparagine; by host" evidence="2">
    <location>
        <position position="514"/>
    </location>
</feature>
<feature type="glycosylation site" description="N-linked (GlcNAc...) asparagine; by host" evidence="2">
    <location>
        <position position="515"/>
    </location>
</feature>
<feature type="glycosylation site" description="N-linked (GlcNAc...) asparagine; by host" evidence="2">
    <location>
        <position position="560"/>
    </location>
</feature>
<feature type="glycosylation site" description="N-linked (GlcNAc...) asparagine; by host" evidence="2">
    <location>
        <position position="727"/>
    </location>
</feature>
<feature type="glycosylation site" description="N-linked (GlcNAc...) asparagine; by host" evidence="2">
    <location>
        <position position="749"/>
    </location>
</feature>
<feature type="disulfide bond" evidence="2">
    <location>
        <begin position="140"/>
        <end position="647"/>
    </location>
</feature>
<feature type="disulfide bond" evidence="2">
    <location>
        <begin position="157"/>
        <end position="603"/>
    </location>
</feature>
<feature type="disulfide bond" evidence="2">
    <location>
        <begin position="231"/>
        <end position="296"/>
    </location>
</feature>
<feature type="disulfide bond" evidence="2">
    <location>
        <begin position="389"/>
        <end position="437"/>
    </location>
</feature>
<feature type="disulfide bond" evidence="2">
    <location>
        <begin position="668"/>
        <end position="708"/>
    </location>
</feature>
<feature type="sequence conflict" description="In Ref. 1; AAA46086." evidence="4" ref="1">
    <original>T</original>
    <variation>Y</variation>
    <location>
        <position position="419"/>
    </location>
</feature>
<feature type="sequence conflict" description="In Ref. 1; AAA46086." evidence="4" ref="1">
    <original>T</original>
    <variation>P</variation>
    <location>
        <position position="604"/>
    </location>
</feature>
<feature type="sequence conflict" description="In Ref. 1; AAA46086." evidence="4" ref="1">
    <original>T</original>
    <variation>P</variation>
    <location>
        <position position="611"/>
    </location>
</feature>
<feature type="sequence conflict" description="In Ref. 1; AAA46086." evidence="4" ref="1">
    <original>N</original>
    <variation>T</variation>
    <location>
        <position position="620"/>
    </location>
</feature>
<feature type="sequence conflict" description="In Ref. 1; AAA46086." evidence="4" ref="1">
    <original>MQGIASFFKGLGKVGEAVGTLVLGAA</original>
    <variation>IRGSPAFSRAWVKWGRPWERSFSAR</variation>
    <location>
        <begin position="807"/>
        <end position="832"/>
    </location>
</feature>
<feature type="sequence conflict" description="In Ref. 1; AAA46086." evidence="4" ref="1">
    <original>S</original>
    <variation>C</variation>
    <location>
        <position position="844"/>
    </location>
</feature>
<proteinExistence type="inferred from homology"/>
<reference key="1">
    <citation type="journal article" date="1990" name="Gene">
        <title>Characterization of the gene and an antigenic determinant of equine herpesvirus type-1 glycoprotein 14 with homology to gB-equivalent glycoproteins of other herpesviruses.</title>
        <authorList>
            <person name="Guo P.X."/>
        </authorList>
    </citation>
    <scope>NUCLEOTIDE SEQUENCE [GENOMIC DNA]</scope>
</reference>
<reference key="2">
    <citation type="journal article" date="1990" name="J. Virol.">
        <title>Coexpression by vaccinia virus recombinants of equine herpesvirus 1 glycoproteins gp13 and gp14 results in potentiated immunity.</title>
        <authorList>
            <person name="Guo P.X."/>
            <person name="Goebel S.J."/>
            <person name="Perkus M.E."/>
            <person name="Taylor J."/>
            <person name="Norton E."/>
            <person name="Allen G."/>
            <person name="Languet B."/>
            <person name="Desmettre P."/>
            <person name="Paoletti E."/>
        </authorList>
    </citation>
    <scope>NUCLEOTIDE SEQUENCE [GENOMIC DNA]</scope>
</reference>
<name>GB_EHV1D</name>
<comment type="function">
    <text evidence="2">Envelope glycoprotein that forms spikes at the surface of virion envelope. Essential for the initial attachment to heparan sulfate moieties of the host cell surface proteoglycans. Involved in fusion of viral and cellular membranes leading to virus entry into the host cell. Following initial binding to its host receptors, membrane fusion is mediated by the fusion machinery composed at least of gB and the heterodimer gH/gL. May be involved in the fusion between the virion envelope and the outer nuclear membrane during virion egress.</text>
</comment>
<comment type="subunit">
    <text evidence="2">Homotrimer; disulfide-linked. Binds to heparan sulfate proteoglycans. Interacts with gH/gL heterodimer.</text>
</comment>
<comment type="subcellular location">
    <subcellularLocation>
        <location evidence="2">Virion membrane</location>
        <topology evidence="2">Single-pass type I membrane protein</topology>
    </subcellularLocation>
    <subcellularLocation>
        <location evidence="2">Host cell membrane</location>
        <topology evidence="2">Single-pass type I membrane protein</topology>
    </subcellularLocation>
    <subcellularLocation>
        <location evidence="2">Host endosome membrane</location>
        <topology evidence="2">Single-pass type I membrane protein</topology>
    </subcellularLocation>
    <subcellularLocation>
        <location evidence="2">Host Golgi apparatus membrane</location>
        <topology evidence="2">Single-pass type I membrane protein</topology>
    </subcellularLocation>
    <text evidence="2">During virion morphogenesis, this protein probably accumulates in the endosomes and trans-Golgi where secondary envelopment occurs. It is probably transported to the cell surface from where it is endocytosed and directed to the trans-Golgi network (TGN).</text>
</comment>
<comment type="PTM">
    <text evidence="4">A proteolytic cleavage by host furin generates two subunits that remain linked by disulfide bonds.</text>
</comment>
<comment type="similarity">
    <text evidence="2">Belongs to the herpesviridae glycoprotein B family.</text>
</comment>